<sequence>MAVQGSQRRLLGSLNSTPTAIPQLGLAANQTGARCLEVSIPDGLFLSLGLVSLVENMLVVATIAKNRNLHSPMYCFICCLALSDLLVSGSNVLETAVILLLEAGALVARAAVLQQVDNVIDVITCSSMLSSLCFLGAIAVDRYISIFYALRYHSIVTLPRARRAIAAIWVASVLFSTLFIAYCDHTAVLLCLVVFFLAVLVLMAVLYVHMLARACQHAQGIARLHKRQRPVHQGFGLKGAVTLTILLGIFFLCWGPFFLHLTLIVLCPEHPTCGCIFKNFNLFLALIICNAIIDPLIYAFHSQELRRTLKEVLTCSW</sequence>
<dbReference type="EMBL" id="AJ245705">
    <property type="protein sequence ID" value="CAB53398.1"/>
    <property type="molecule type" value="Genomic_DNA"/>
</dbReference>
<dbReference type="EMBL" id="AY205086">
    <property type="protein sequence ID" value="AAP30960.1"/>
    <property type="molecule type" value="Genomic_DNA"/>
</dbReference>
<dbReference type="EMBL" id="AB296236">
    <property type="protein sequence ID" value="BAF48468.1"/>
    <property type="molecule type" value="Genomic_DNA"/>
</dbReference>
<dbReference type="RefSeq" id="NP_001009152.1">
    <property type="nucleotide sequence ID" value="NM_001009152.1"/>
</dbReference>
<dbReference type="SMR" id="Q9TUK4"/>
<dbReference type="FunCoup" id="Q9TUK4">
    <property type="interactions" value="914"/>
</dbReference>
<dbReference type="GlyCosmos" id="Q9TUK4">
    <property type="glycosylation" value="1 site, No reported glycans"/>
</dbReference>
<dbReference type="PaxDb" id="9598-ENSPTRP00000054393"/>
<dbReference type="GeneID" id="493980"/>
<dbReference type="KEGG" id="ptr:493980"/>
<dbReference type="CTD" id="4157"/>
<dbReference type="eggNOG" id="KOG3656">
    <property type="taxonomic scope" value="Eukaryota"/>
</dbReference>
<dbReference type="HOGENOM" id="CLU_009579_13_0_1"/>
<dbReference type="InParanoid" id="Q9TUK4"/>
<dbReference type="TreeFam" id="TF332646"/>
<dbReference type="Proteomes" id="UP000002277">
    <property type="component" value="Unplaced"/>
</dbReference>
<dbReference type="GO" id="GO:0005737">
    <property type="term" value="C:cytoplasm"/>
    <property type="evidence" value="ECO:0000318"/>
    <property type="project" value="GO_Central"/>
</dbReference>
<dbReference type="GO" id="GO:0005886">
    <property type="term" value="C:plasma membrane"/>
    <property type="evidence" value="ECO:0000250"/>
    <property type="project" value="UniProtKB"/>
</dbReference>
<dbReference type="GO" id="GO:0004980">
    <property type="term" value="F:melanocyte-stimulating hormone receptor activity"/>
    <property type="evidence" value="ECO:0000318"/>
    <property type="project" value="GO_Central"/>
</dbReference>
<dbReference type="GO" id="GO:0007189">
    <property type="term" value="P:adenylate cyclase-activating G protein-coupled receptor signaling pathway"/>
    <property type="evidence" value="ECO:0000318"/>
    <property type="project" value="GO_Central"/>
</dbReference>
<dbReference type="GO" id="GO:0019222">
    <property type="term" value="P:regulation of metabolic process"/>
    <property type="evidence" value="ECO:0000318"/>
    <property type="project" value="GO_Central"/>
</dbReference>
<dbReference type="CDD" id="cd15351">
    <property type="entry name" value="7tmA_MC1R"/>
    <property type="match status" value="1"/>
</dbReference>
<dbReference type="FunFam" id="1.20.1070.10:FF:000211">
    <property type="entry name" value="Melanocyte-stimulating hormone receptor"/>
    <property type="match status" value="1"/>
</dbReference>
<dbReference type="Gene3D" id="1.20.1070.10">
    <property type="entry name" value="Rhodopsin 7-helix transmembrane proteins"/>
    <property type="match status" value="1"/>
</dbReference>
<dbReference type="InterPro" id="IPR000276">
    <property type="entry name" value="GPCR_Rhodpsn"/>
</dbReference>
<dbReference type="InterPro" id="IPR017452">
    <property type="entry name" value="GPCR_Rhodpsn_7TM"/>
</dbReference>
<dbReference type="InterPro" id="IPR001671">
    <property type="entry name" value="Melcrt_ACTH_rcpt"/>
</dbReference>
<dbReference type="InterPro" id="IPR000761">
    <property type="entry name" value="MSH_rcpt"/>
</dbReference>
<dbReference type="PANTHER" id="PTHR22750">
    <property type="entry name" value="G-PROTEIN COUPLED RECEPTOR"/>
    <property type="match status" value="1"/>
</dbReference>
<dbReference type="Pfam" id="PF00001">
    <property type="entry name" value="7tm_1"/>
    <property type="match status" value="2"/>
</dbReference>
<dbReference type="PRINTS" id="PR00237">
    <property type="entry name" value="GPCRRHODOPSN"/>
</dbReference>
<dbReference type="PRINTS" id="PR00534">
    <property type="entry name" value="MCRFAMILY"/>
</dbReference>
<dbReference type="PRINTS" id="PR00536">
    <property type="entry name" value="MELNOCYTESHR"/>
</dbReference>
<dbReference type="SMART" id="SM01381">
    <property type="entry name" value="7TM_GPCR_Srsx"/>
    <property type="match status" value="1"/>
</dbReference>
<dbReference type="SUPFAM" id="SSF81321">
    <property type="entry name" value="Family A G protein-coupled receptor-like"/>
    <property type="match status" value="1"/>
</dbReference>
<dbReference type="PROSITE" id="PS00237">
    <property type="entry name" value="G_PROTEIN_RECEP_F1_1"/>
    <property type="match status" value="1"/>
</dbReference>
<dbReference type="PROSITE" id="PS50262">
    <property type="entry name" value="G_PROTEIN_RECEP_F1_2"/>
    <property type="match status" value="1"/>
</dbReference>
<evidence type="ECO:0000250" key="1">
    <source>
        <dbReference type="UniProtKB" id="Q01726"/>
    </source>
</evidence>
<evidence type="ECO:0000255" key="2"/>
<evidence type="ECO:0000255" key="3">
    <source>
        <dbReference type="PROSITE-ProRule" id="PRU00521"/>
    </source>
</evidence>
<name>MSHR_PANTR</name>
<feature type="chain" id="PRO_0000069837" description="Melanocyte-stimulating hormone receptor">
    <location>
        <begin position="1"/>
        <end position="317"/>
    </location>
</feature>
<feature type="topological domain" description="Extracellular" evidence="2">
    <location>
        <begin position="1"/>
        <end position="37"/>
    </location>
</feature>
<feature type="transmembrane region" description="Helical; Name=1" evidence="2">
    <location>
        <begin position="38"/>
        <end position="63"/>
    </location>
</feature>
<feature type="topological domain" description="Cytoplasmic" evidence="2">
    <location>
        <begin position="64"/>
        <end position="72"/>
    </location>
</feature>
<feature type="transmembrane region" description="Helical; Name=2" evidence="2">
    <location>
        <begin position="73"/>
        <end position="93"/>
    </location>
</feature>
<feature type="topological domain" description="Extracellular" evidence="2">
    <location>
        <begin position="94"/>
        <end position="118"/>
    </location>
</feature>
<feature type="transmembrane region" description="Helical; Name=3" evidence="2">
    <location>
        <begin position="119"/>
        <end position="140"/>
    </location>
</feature>
<feature type="topological domain" description="Cytoplasmic" evidence="2">
    <location>
        <begin position="141"/>
        <end position="163"/>
    </location>
</feature>
<feature type="transmembrane region" description="Helical; Name=4" evidence="2">
    <location>
        <begin position="164"/>
        <end position="183"/>
    </location>
</feature>
<feature type="topological domain" description="Extracellular" evidence="2">
    <location>
        <begin position="184"/>
        <end position="191"/>
    </location>
</feature>
<feature type="transmembrane region" description="Helical; Name=5" evidence="2">
    <location>
        <begin position="192"/>
        <end position="211"/>
    </location>
</feature>
<feature type="topological domain" description="Cytoplasmic" evidence="2">
    <location>
        <begin position="212"/>
        <end position="240"/>
    </location>
</feature>
<feature type="transmembrane region" description="Helical; Name=6" evidence="2">
    <location>
        <begin position="241"/>
        <end position="266"/>
    </location>
</feature>
<feature type="topological domain" description="Extracellular" evidence="2">
    <location>
        <begin position="267"/>
        <end position="279"/>
    </location>
</feature>
<feature type="transmembrane region" description="Helical; Name=7" evidence="2">
    <location>
        <begin position="280"/>
        <end position="300"/>
    </location>
</feature>
<feature type="topological domain" description="Cytoplasmic" evidence="2">
    <location>
        <begin position="301"/>
        <end position="317"/>
    </location>
</feature>
<feature type="lipid moiety-binding region" description="S-palmitoyl cysteine" evidence="2">
    <location>
        <position position="315"/>
    </location>
</feature>
<feature type="glycosylation site" description="N-linked (GlcNAc...) asparagine" evidence="2">
    <location>
        <position position="29"/>
    </location>
</feature>
<organism>
    <name type="scientific">Pan troglodytes</name>
    <name type="common">Chimpanzee</name>
    <dbReference type="NCBI Taxonomy" id="9598"/>
    <lineage>
        <taxon>Eukaryota</taxon>
        <taxon>Metazoa</taxon>
        <taxon>Chordata</taxon>
        <taxon>Craniata</taxon>
        <taxon>Vertebrata</taxon>
        <taxon>Euteleostomi</taxon>
        <taxon>Mammalia</taxon>
        <taxon>Eutheria</taxon>
        <taxon>Euarchontoglires</taxon>
        <taxon>Primates</taxon>
        <taxon>Haplorrhini</taxon>
        <taxon>Catarrhini</taxon>
        <taxon>Hominidae</taxon>
        <taxon>Pan</taxon>
    </lineage>
</organism>
<accession>Q9TUK4</accession>
<accession>A3KFA5</accession>
<accession>Q864L1</accession>
<gene>
    <name type="primary">MC1R</name>
</gene>
<protein>
    <recommendedName>
        <fullName>Melanocyte-stimulating hormone receptor</fullName>
        <shortName>MSH-R</shortName>
    </recommendedName>
    <alternativeName>
        <fullName>Melanocortin receptor 1</fullName>
        <shortName>MC1-R</shortName>
    </alternativeName>
</protein>
<comment type="function">
    <text evidence="1">Receptor for MSH (alpha, beta and gamma) and ACTH. The activity of this receptor is mediated by G proteins which activate adenylate cyclase. Mediates melanogenesis, the production of eumelanin (black/brown) and phaeomelanin (red/yellow), via regulation of cAMP signaling in melanocytes.</text>
</comment>
<comment type="subunit">
    <text evidence="1">Interacts with MGRN1, but does not undergo MGRN1-mediated ubiquitination; this interaction competes with GNAS-binding and thus inhibits agonist-induced cAMP production. Interacts with OPN3; the interaction results in a decrease in MC1R-mediated cAMP signaling and ultimately a decrease in melanin production in melanocytes.</text>
</comment>
<comment type="subcellular location">
    <subcellularLocation>
        <location evidence="1">Cell membrane</location>
        <topology evidence="2">Multi-pass membrane protein</topology>
    </subcellularLocation>
</comment>
<comment type="similarity">
    <text evidence="3">Belongs to the G-protein coupled receptor 1 family.</text>
</comment>
<reference key="1">
    <citation type="submission" date="1999-08" db="EMBL/GenBank/DDBJ databases">
        <title>Chimpanzee melanocortin 1 sequence.</title>
        <authorList>
            <person name="Rees J.L."/>
            <person name="Harding R.M."/>
            <person name="Healy E."/>
            <person name="Jackson I.J."/>
            <person name="Ray A.J."/>
            <person name="Ellis N.S."/>
            <person name="Flanagan N."/>
            <person name="Todd C."/>
            <person name="Dixon C."/>
            <person name="Matthews J.N."/>
            <person name="Sajantila A."/>
            <person name="Birch-MacHin M.A."/>
        </authorList>
    </citation>
    <scope>NUCLEOTIDE SEQUENCE [GENOMIC DNA]</scope>
</reference>
<reference key="2">
    <citation type="journal article" date="2003" name="Am. J. Phys. Anthropol.">
        <title>Evolution of a pigmentation gene, the melanocortin-1 receptor, in primates.</title>
        <authorList>
            <person name="Mundy N.I."/>
            <person name="Kelly J."/>
        </authorList>
    </citation>
    <scope>NUCLEOTIDE SEQUENCE [GENOMIC DNA]</scope>
    <source>
        <strain>Isolate 3</strain>
    </source>
</reference>
<reference key="3">
    <citation type="journal article" date="2008" name="Am. J. Primatol.">
        <title>Variation of the melanocortin 1 receptor gene in the macaques.</title>
        <authorList>
            <person name="Nakayama K."/>
            <person name="Shotake T."/>
            <person name="Takeneka O."/>
            <person name="Ishida T."/>
        </authorList>
    </citation>
    <scope>NUCLEOTIDE SEQUENCE [GENOMIC DNA]</scope>
</reference>
<keyword id="KW-1003">Cell membrane</keyword>
<keyword id="KW-0297">G-protein coupled receptor</keyword>
<keyword id="KW-0325">Glycoprotein</keyword>
<keyword id="KW-0449">Lipoprotein</keyword>
<keyword id="KW-0472">Membrane</keyword>
<keyword id="KW-0564">Palmitate</keyword>
<keyword id="KW-0675">Receptor</keyword>
<keyword id="KW-1185">Reference proteome</keyword>
<keyword id="KW-0807">Transducer</keyword>
<keyword id="KW-0812">Transmembrane</keyword>
<keyword id="KW-1133">Transmembrane helix</keyword>
<proteinExistence type="inferred from homology"/>